<feature type="chain" id="PRO_1000130942" description="Inosine/xanthosine triphosphatase">
    <location>
        <begin position="1"/>
        <end position="171"/>
    </location>
</feature>
<feature type="binding site" evidence="1">
    <location>
        <begin position="8"/>
        <end position="13"/>
    </location>
    <ligand>
        <name>substrate</name>
    </ligand>
</feature>
<feature type="binding site" evidence="1">
    <location>
        <position position="38"/>
    </location>
    <ligand>
        <name>Mg(2+)</name>
        <dbReference type="ChEBI" id="CHEBI:18420"/>
    </ligand>
</feature>
<feature type="binding site" evidence="1">
    <location>
        <position position="68"/>
    </location>
    <ligand>
        <name>Mg(2+)</name>
        <dbReference type="ChEBI" id="CHEBI:18420"/>
    </ligand>
</feature>
<comment type="function">
    <text evidence="1">Phosphatase that hydrolyzes non-canonical purine nucleotides such as XTP and ITP to their respective diphosphate derivatives. Probably excludes non-canonical purines from DNA/RNA precursor pool, thus preventing their incorporation into DNA/RNA and avoiding chromosomal lesions.</text>
</comment>
<comment type="catalytic activity">
    <reaction evidence="1">
        <text>XTP + H2O = XDP + phosphate + H(+)</text>
        <dbReference type="Rhea" id="RHEA:28406"/>
        <dbReference type="ChEBI" id="CHEBI:15377"/>
        <dbReference type="ChEBI" id="CHEBI:15378"/>
        <dbReference type="ChEBI" id="CHEBI:43474"/>
        <dbReference type="ChEBI" id="CHEBI:59884"/>
        <dbReference type="ChEBI" id="CHEBI:61314"/>
        <dbReference type="EC" id="3.6.1.73"/>
    </reaction>
</comment>
<comment type="catalytic activity">
    <reaction evidence="1">
        <text>ITP + H2O = IDP + phosphate + H(+)</text>
        <dbReference type="Rhea" id="RHEA:28330"/>
        <dbReference type="ChEBI" id="CHEBI:15377"/>
        <dbReference type="ChEBI" id="CHEBI:15378"/>
        <dbReference type="ChEBI" id="CHEBI:43474"/>
        <dbReference type="ChEBI" id="CHEBI:58280"/>
        <dbReference type="ChEBI" id="CHEBI:61402"/>
        <dbReference type="EC" id="3.6.1.73"/>
    </reaction>
</comment>
<comment type="cofactor">
    <cofactor evidence="1">
        <name>Mg(2+)</name>
        <dbReference type="ChEBI" id="CHEBI:18420"/>
    </cofactor>
    <cofactor evidence="1">
        <name>Mn(2+)</name>
        <dbReference type="ChEBI" id="CHEBI:29035"/>
    </cofactor>
    <text evidence="1">Binds 1 divalent metal cation per subunit; can use either Mg(2+) or Mn(2+).</text>
</comment>
<comment type="subunit">
    <text evidence="1">Homodimer.</text>
</comment>
<comment type="similarity">
    <text evidence="1">Belongs to the YjjX NTPase family.</text>
</comment>
<proteinExistence type="inferred from homology"/>
<sequence>MHQVISATTNPAKIQAILQAFEEIFGEGSCHITPVAVESGVPEQPFGSEETRAGARNRVDNARRLHPQADFWVAIEAGIDDDATFSWVVIDNGVQRGEARSATLPLPAVILDRVRQGEALGPVMSHYTGIDEIGRKEGAIGVFTAGKLTRSSVYYQAVILALSPFHNAVYR</sequence>
<reference key="1">
    <citation type="journal article" date="2011" name="J. Bacteriol.">
        <title>Comparative genomics of 28 Salmonella enterica isolates: evidence for CRISPR-mediated adaptive sublineage evolution.</title>
        <authorList>
            <person name="Fricke W.F."/>
            <person name="Mammel M.K."/>
            <person name="McDermott P.F."/>
            <person name="Tartera C."/>
            <person name="White D.G."/>
            <person name="Leclerc J.E."/>
            <person name="Ravel J."/>
            <person name="Cebula T.A."/>
        </authorList>
    </citation>
    <scope>NUCLEOTIDE SEQUENCE [LARGE SCALE GENOMIC DNA]</scope>
    <source>
        <strain>SL483</strain>
    </source>
</reference>
<gene>
    <name type="primary">yjjX</name>
    <name type="ordered locus">SeAg_B4908</name>
</gene>
<name>NCPP_SALA4</name>
<dbReference type="EC" id="3.6.1.73" evidence="1"/>
<dbReference type="EMBL" id="CP001138">
    <property type="protein sequence ID" value="ACH50511.1"/>
    <property type="molecule type" value="Genomic_DNA"/>
</dbReference>
<dbReference type="RefSeq" id="WP_000554310.1">
    <property type="nucleotide sequence ID" value="NC_011149.1"/>
</dbReference>
<dbReference type="SMR" id="B5F542"/>
<dbReference type="KEGG" id="sea:SeAg_B4908"/>
<dbReference type="HOGENOM" id="CLU_087417_1_0_6"/>
<dbReference type="Proteomes" id="UP000008819">
    <property type="component" value="Chromosome"/>
</dbReference>
<dbReference type="GO" id="GO:0103023">
    <property type="term" value="F:ITPase activity"/>
    <property type="evidence" value="ECO:0007669"/>
    <property type="project" value="UniProtKB-EC"/>
</dbReference>
<dbReference type="GO" id="GO:0046872">
    <property type="term" value="F:metal ion binding"/>
    <property type="evidence" value="ECO:0007669"/>
    <property type="project" value="UniProtKB-KW"/>
</dbReference>
<dbReference type="GO" id="GO:0000166">
    <property type="term" value="F:nucleotide binding"/>
    <property type="evidence" value="ECO:0007669"/>
    <property type="project" value="UniProtKB-KW"/>
</dbReference>
<dbReference type="GO" id="GO:0017111">
    <property type="term" value="F:ribonucleoside triphosphate phosphatase activity"/>
    <property type="evidence" value="ECO:0000250"/>
    <property type="project" value="UniProtKB"/>
</dbReference>
<dbReference type="GO" id="GO:0009117">
    <property type="term" value="P:nucleotide metabolic process"/>
    <property type="evidence" value="ECO:0007669"/>
    <property type="project" value="UniProtKB-KW"/>
</dbReference>
<dbReference type="GO" id="GO:0006772">
    <property type="term" value="P:thiamine metabolic process"/>
    <property type="evidence" value="ECO:0007669"/>
    <property type="project" value="TreeGrafter"/>
</dbReference>
<dbReference type="FunFam" id="3.90.950.10:FF:000002">
    <property type="entry name" value="Inosine/xanthosine triphosphatase"/>
    <property type="match status" value="1"/>
</dbReference>
<dbReference type="Gene3D" id="3.90.950.10">
    <property type="match status" value="1"/>
</dbReference>
<dbReference type="HAMAP" id="MF_00648">
    <property type="entry name" value="Non_canon_purine_NTPase_YjjX"/>
    <property type="match status" value="1"/>
</dbReference>
<dbReference type="InterPro" id="IPR029001">
    <property type="entry name" value="ITPase-like_fam"/>
</dbReference>
<dbReference type="InterPro" id="IPR002786">
    <property type="entry name" value="Non_canon_purine_NTPase"/>
</dbReference>
<dbReference type="InterPro" id="IPR026533">
    <property type="entry name" value="NTPase/PRRC1"/>
</dbReference>
<dbReference type="InterPro" id="IPR050299">
    <property type="entry name" value="YjjX_NTPase"/>
</dbReference>
<dbReference type="NCBIfam" id="TIGR00258">
    <property type="entry name" value="inosine/xanthosine triphosphatase"/>
    <property type="match status" value="1"/>
</dbReference>
<dbReference type="NCBIfam" id="NF003459">
    <property type="entry name" value="PRK05074.1"/>
    <property type="match status" value="1"/>
</dbReference>
<dbReference type="PANTHER" id="PTHR34699">
    <property type="match status" value="1"/>
</dbReference>
<dbReference type="PANTHER" id="PTHR34699:SF2">
    <property type="entry name" value="NON-CANONICAL PURINE NTP PHOSPHATASE_PRRC1 DOMAIN-CONTAINING PROTEIN"/>
    <property type="match status" value="1"/>
</dbReference>
<dbReference type="Pfam" id="PF01931">
    <property type="entry name" value="NTPase_I-T"/>
    <property type="match status" value="1"/>
</dbReference>
<dbReference type="SUPFAM" id="SSF52972">
    <property type="entry name" value="ITPase-like"/>
    <property type="match status" value="1"/>
</dbReference>
<keyword id="KW-0378">Hydrolase</keyword>
<keyword id="KW-0460">Magnesium</keyword>
<keyword id="KW-0464">Manganese</keyword>
<keyword id="KW-0479">Metal-binding</keyword>
<keyword id="KW-0546">Nucleotide metabolism</keyword>
<keyword id="KW-0547">Nucleotide-binding</keyword>
<evidence type="ECO:0000255" key="1">
    <source>
        <dbReference type="HAMAP-Rule" id="MF_00648"/>
    </source>
</evidence>
<protein>
    <recommendedName>
        <fullName evidence="1">Inosine/xanthosine triphosphatase</fullName>
        <shortName evidence="1">ITPase/XTPase</shortName>
        <ecNumber evidence="1">3.6.1.73</ecNumber>
    </recommendedName>
    <alternativeName>
        <fullName evidence="1">Non-canonical purine NTP phosphatase</fullName>
    </alternativeName>
    <alternativeName>
        <fullName evidence="1">Non-standard purine NTP phosphatase</fullName>
    </alternativeName>
    <alternativeName>
        <fullName evidence="1">Nucleoside-triphosphate phosphatase</fullName>
        <shortName evidence="1">NTPase</shortName>
    </alternativeName>
</protein>
<accession>B5F542</accession>
<organism>
    <name type="scientific">Salmonella agona (strain SL483)</name>
    <dbReference type="NCBI Taxonomy" id="454166"/>
    <lineage>
        <taxon>Bacteria</taxon>
        <taxon>Pseudomonadati</taxon>
        <taxon>Pseudomonadota</taxon>
        <taxon>Gammaproteobacteria</taxon>
        <taxon>Enterobacterales</taxon>
        <taxon>Enterobacteriaceae</taxon>
        <taxon>Salmonella</taxon>
    </lineage>
</organism>